<keyword id="KW-1003">Cell membrane</keyword>
<keyword id="KW-0165">Cleavage on pair of basic residues</keyword>
<keyword id="KW-1015">Disulfide bond</keyword>
<keyword id="KW-0895">ERV</keyword>
<keyword id="KW-0325">Glycoprotein</keyword>
<keyword id="KW-0472">Membrane</keyword>
<keyword id="KW-1185">Reference proteome</keyword>
<keyword id="KW-0732">Signal</keyword>
<keyword id="KW-0812">Transmembrane</keyword>
<keyword id="KW-1133">Transmembrane helix</keyword>
<keyword id="KW-0814">Transposable element</keyword>
<keyword id="KW-0261">Viral envelope protein</keyword>
<keyword id="KW-0946">Virion</keyword>
<accession>P60507</accession>
<accession>Q5JTS0</accession>
<sequence>MARPSPLCLLLLLTLLTPIVPSNSLLTEPPFRWRFYLHETWTQGNRLSTVTLATVDCQPHGCQAQVTFNFTSFKSVLRGWSNPTICFVYDQTHSNCRDYWVDTNGGCPYAYCRMHVTQLHTAKKLQHTYRLTSDGRTTYFLTIPDPWDSRWVSGVTGRLYRWPTDSYPVGKLRIFLTYIRVIPQVLSNLKDQADNIKHQEEVINTLVQSHPKADMVTYDDKAEAGPFSWITLVRHGARLVNMAGLVNLSHCFLCTALSQPPLVAVPLPQAFNTSGNHTAHPSGVFSEQVPLFRDPLQPQFPFCYTTPNSSWCNQTYSGSLSNLSAPAGGYFWCNFTLTKHLNISSNNTLSRNLCLPISLVPRLTLYSEAELSSLVNPPMRQKRAVFPPLVIGVSLTSSLVASGLGTGAIVHFISSSQDLSIKLQMAIEASAESLASLQRQITSVAKVAMQNRRALDLLTADKGGTCMFLGEECCYYINESGLVETSLLTLDKIRDGLHRPSSTPNYGGGWWQSPLTTWIIPFISPILIICLLLLIAPCVLKFIKNRISEVSRVTVNQMLLHPYSRLPTSEDHYDDALTQQEAAR</sequence>
<feature type="signal peptide" evidence="2">
    <location>
        <begin position="1"/>
        <end position="22"/>
    </location>
</feature>
<feature type="chain" id="PRO_0000008430" description="Endogenous retrovirus group FC1 Env polyprotein">
    <location>
        <begin position="23"/>
        <end position="584"/>
    </location>
</feature>
<feature type="chain" id="PRO_0000008431" description="Surface protein" evidence="1">
    <location>
        <begin position="23"/>
        <end position="383"/>
    </location>
</feature>
<feature type="chain" id="PRO_0000008432" description="Transmembrane protein" evidence="1">
    <location>
        <begin position="384"/>
        <end position="584"/>
    </location>
</feature>
<feature type="topological domain" description="Extracellular" evidence="2">
    <location>
        <begin position="23"/>
        <end position="518"/>
    </location>
</feature>
<feature type="transmembrane region" description="Helical" evidence="2">
    <location>
        <begin position="519"/>
        <end position="539"/>
    </location>
</feature>
<feature type="topological domain" description="Cytoplasmic" evidence="2">
    <location>
        <begin position="540"/>
        <end position="584"/>
    </location>
</feature>
<feature type="region of interest" description="Fusion peptide" evidence="2">
    <location>
        <begin position="384"/>
        <end position="404"/>
    </location>
</feature>
<feature type="short sequence motif" description="CXXC" evidence="1">
    <location>
        <begin position="251"/>
        <end position="254"/>
    </location>
</feature>
<feature type="short sequence motif" description="CKS-17" evidence="1">
    <location>
        <begin position="449"/>
        <end position="465"/>
    </location>
</feature>
<feature type="short sequence motif" description="CX6CC" evidence="1">
    <location>
        <begin position="466"/>
        <end position="474"/>
    </location>
</feature>
<feature type="site" description="Cleavage" evidence="1">
    <location>
        <begin position="383"/>
        <end position="384"/>
    </location>
</feature>
<feature type="glycosylation site" description="N-linked (GlcNAc...) asparagine" evidence="2">
    <location>
        <position position="69"/>
    </location>
</feature>
<feature type="glycosylation site" description="N-linked (GlcNAc...) asparagine" evidence="2">
    <location>
        <position position="247"/>
    </location>
</feature>
<feature type="glycosylation site" description="N-linked (GlcNAc...) asparagine" evidence="2">
    <location>
        <position position="272"/>
    </location>
</feature>
<feature type="glycosylation site" description="N-linked (GlcNAc...) asparagine" evidence="2">
    <location>
        <position position="276"/>
    </location>
</feature>
<feature type="glycosylation site" description="N-linked (GlcNAc...) asparagine" evidence="2">
    <location>
        <position position="308"/>
    </location>
</feature>
<feature type="glycosylation site" description="N-linked (GlcNAc...) asparagine" evidence="2">
    <location>
        <position position="313"/>
    </location>
</feature>
<feature type="glycosylation site" description="N-linked (GlcNAc...) asparagine" evidence="2">
    <location>
        <position position="322"/>
    </location>
</feature>
<feature type="glycosylation site" description="N-linked (GlcNAc...) asparagine" evidence="2">
    <location>
        <position position="334"/>
    </location>
</feature>
<feature type="glycosylation site" description="N-linked (GlcNAc...) asparagine" evidence="2">
    <location>
        <position position="342"/>
    </location>
</feature>
<feature type="glycosylation site" description="N-linked (GlcNAc...) asparagine" evidence="2">
    <location>
        <position position="346"/>
    </location>
</feature>
<feature type="glycosylation site" description="N-linked (GlcNAc...) asparagine" evidence="2">
    <location>
        <position position="478"/>
    </location>
</feature>
<feature type="disulfide bond" evidence="1">
    <location>
        <begin position="466"/>
        <end position="473"/>
    </location>
</feature>
<dbReference type="EMBL" id="AL354685">
    <property type="status" value="NOT_ANNOTATED_CDS"/>
    <property type="molecule type" value="Genomic_DNA"/>
</dbReference>
<dbReference type="RefSeq" id="XP_011507308.1">
    <property type="nucleotide sequence ID" value="XM_011509006.2"/>
</dbReference>
<dbReference type="RefSeq" id="XP_011529387.1">
    <property type="nucleotide sequence ID" value="XM_011531085.3"/>
</dbReference>
<dbReference type="SMR" id="P60507"/>
<dbReference type="GlyCosmos" id="P60507">
    <property type="glycosylation" value="11 sites, No reported glycans"/>
</dbReference>
<dbReference type="GlyGen" id="P60507">
    <property type="glycosylation" value="11 sites"/>
</dbReference>
<dbReference type="iPTMnet" id="P60507"/>
<dbReference type="PhosphoSitePlus" id="P60507"/>
<dbReference type="BioMuta" id="ERVFC1"/>
<dbReference type="MassIVE" id="P60507"/>
<dbReference type="PeptideAtlas" id="P60507"/>
<dbReference type="GeneID" id="105373297"/>
<dbReference type="KEGG" id="hsa:105373297"/>
<dbReference type="CTD" id="105373297"/>
<dbReference type="GeneCards" id="ERVFC1"/>
<dbReference type="neXtProt" id="NX_P60507"/>
<dbReference type="InParanoid" id="P60507"/>
<dbReference type="PAN-GO" id="P60507">
    <property type="GO annotations" value="0 GO annotations based on evolutionary models"/>
</dbReference>
<dbReference type="PhylomeDB" id="P60507"/>
<dbReference type="BioGRID-ORCS" id="105373297">
    <property type="hits" value="0 hits in 1 CRISPR screen"/>
</dbReference>
<dbReference type="Pharos" id="P60507">
    <property type="development level" value="Tdark"/>
</dbReference>
<dbReference type="PRO" id="PR:P60507"/>
<dbReference type="Proteomes" id="UP000005640">
    <property type="component" value="Unplaced"/>
</dbReference>
<dbReference type="RNAct" id="P60507">
    <property type="molecule type" value="protein"/>
</dbReference>
<dbReference type="GO" id="GO:0005886">
    <property type="term" value="C:plasma membrane"/>
    <property type="evidence" value="ECO:0007669"/>
    <property type="project" value="UniProtKB-SubCell"/>
</dbReference>
<dbReference type="CDD" id="cd09851">
    <property type="entry name" value="HTLV-1-like_HR1-HR2"/>
    <property type="match status" value="1"/>
</dbReference>
<dbReference type="Gene3D" id="1.10.287.210">
    <property type="match status" value="1"/>
</dbReference>
<dbReference type="InterPro" id="IPR018154">
    <property type="entry name" value="TLV/ENV_coat_polyprotein"/>
</dbReference>
<dbReference type="PANTHER" id="PTHR10424:SF73">
    <property type="entry name" value="ENDOGENOUS RETROVIRUS GROUP FC1 ENV POLYPROTEIN-RELATED"/>
    <property type="match status" value="1"/>
</dbReference>
<dbReference type="PANTHER" id="PTHR10424">
    <property type="entry name" value="VIRAL ENVELOPE PROTEIN"/>
    <property type="match status" value="1"/>
</dbReference>
<dbReference type="Pfam" id="PF00429">
    <property type="entry name" value="TLV_coat"/>
    <property type="match status" value="1"/>
</dbReference>
<dbReference type="SUPFAM" id="SSF58069">
    <property type="entry name" value="Virus ectodomain"/>
    <property type="match status" value="1"/>
</dbReference>
<proteinExistence type="evidence at protein level"/>
<gene>
    <name type="primary">ERVFC1</name>
</gene>
<protein>
    <recommendedName>
        <fullName>Endogenous retrovirus group FC1 Env polyprotein</fullName>
    </recommendedName>
    <alternativeName>
        <fullName>Envelope polyprotein</fullName>
    </alternativeName>
    <alternativeName>
        <fullName>Fc1env</fullName>
    </alternativeName>
    <alternativeName>
        <fullName>HERV-F(c)1_Xq21.33 provirus ancestral Env polyprotein</fullName>
    </alternativeName>
    <alternativeName>
        <fullName>HERV-Fc1env</fullName>
    </alternativeName>
    <component>
        <recommendedName>
            <fullName>Surface protein</fullName>
            <shortName>SU</shortName>
        </recommendedName>
    </component>
    <component>
        <recommendedName>
            <fullName>Transmembrane protein</fullName>
            <shortName>TM</shortName>
        </recommendedName>
    </component>
</protein>
<reference key="1">
    <citation type="journal article" date="2005" name="Nature">
        <title>The DNA sequence of the human X chromosome.</title>
        <authorList>
            <person name="Ross M.T."/>
            <person name="Grafham D.V."/>
            <person name="Coffey A.J."/>
            <person name="Scherer S."/>
            <person name="McLay K."/>
            <person name="Muzny D."/>
            <person name="Platzer M."/>
            <person name="Howell G.R."/>
            <person name="Burrows C."/>
            <person name="Bird C.P."/>
            <person name="Frankish A."/>
            <person name="Lovell F.L."/>
            <person name="Howe K.L."/>
            <person name="Ashurst J.L."/>
            <person name="Fulton R.S."/>
            <person name="Sudbrak R."/>
            <person name="Wen G."/>
            <person name="Jones M.C."/>
            <person name="Hurles M.E."/>
            <person name="Andrews T.D."/>
            <person name="Scott C.E."/>
            <person name="Searle S."/>
            <person name="Ramser J."/>
            <person name="Whittaker A."/>
            <person name="Deadman R."/>
            <person name="Carter N.P."/>
            <person name="Hunt S.E."/>
            <person name="Chen R."/>
            <person name="Cree A."/>
            <person name="Gunaratne P."/>
            <person name="Havlak P."/>
            <person name="Hodgson A."/>
            <person name="Metzker M.L."/>
            <person name="Richards S."/>
            <person name="Scott G."/>
            <person name="Steffen D."/>
            <person name="Sodergren E."/>
            <person name="Wheeler D.A."/>
            <person name="Worley K.C."/>
            <person name="Ainscough R."/>
            <person name="Ambrose K.D."/>
            <person name="Ansari-Lari M.A."/>
            <person name="Aradhya S."/>
            <person name="Ashwell R.I."/>
            <person name="Babbage A.K."/>
            <person name="Bagguley C.L."/>
            <person name="Ballabio A."/>
            <person name="Banerjee R."/>
            <person name="Barker G.E."/>
            <person name="Barlow K.F."/>
            <person name="Barrett I.P."/>
            <person name="Bates K.N."/>
            <person name="Beare D.M."/>
            <person name="Beasley H."/>
            <person name="Beasley O."/>
            <person name="Beck A."/>
            <person name="Bethel G."/>
            <person name="Blechschmidt K."/>
            <person name="Brady N."/>
            <person name="Bray-Allen S."/>
            <person name="Bridgeman A.M."/>
            <person name="Brown A.J."/>
            <person name="Brown M.J."/>
            <person name="Bonnin D."/>
            <person name="Bruford E.A."/>
            <person name="Buhay C."/>
            <person name="Burch P."/>
            <person name="Burford D."/>
            <person name="Burgess J."/>
            <person name="Burrill W."/>
            <person name="Burton J."/>
            <person name="Bye J.M."/>
            <person name="Carder C."/>
            <person name="Carrel L."/>
            <person name="Chako J."/>
            <person name="Chapman J.C."/>
            <person name="Chavez D."/>
            <person name="Chen E."/>
            <person name="Chen G."/>
            <person name="Chen Y."/>
            <person name="Chen Z."/>
            <person name="Chinault C."/>
            <person name="Ciccodicola A."/>
            <person name="Clark S.Y."/>
            <person name="Clarke G."/>
            <person name="Clee C.M."/>
            <person name="Clegg S."/>
            <person name="Clerc-Blankenburg K."/>
            <person name="Clifford K."/>
            <person name="Cobley V."/>
            <person name="Cole C.G."/>
            <person name="Conquer J.S."/>
            <person name="Corby N."/>
            <person name="Connor R.E."/>
            <person name="David R."/>
            <person name="Davies J."/>
            <person name="Davis C."/>
            <person name="Davis J."/>
            <person name="Delgado O."/>
            <person name="Deshazo D."/>
            <person name="Dhami P."/>
            <person name="Ding Y."/>
            <person name="Dinh H."/>
            <person name="Dodsworth S."/>
            <person name="Draper H."/>
            <person name="Dugan-Rocha S."/>
            <person name="Dunham A."/>
            <person name="Dunn M."/>
            <person name="Durbin K.J."/>
            <person name="Dutta I."/>
            <person name="Eades T."/>
            <person name="Ellwood M."/>
            <person name="Emery-Cohen A."/>
            <person name="Errington H."/>
            <person name="Evans K.L."/>
            <person name="Faulkner L."/>
            <person name="Francis F."/>
            <person name="Frankland J."/>
            <person name="Fraser A.E."/>
            <person name="Galgoczy P."/>
            <person name="Gilbert J."/>
            <person name="Gill R."/>
            <person name="Gloeckner G."/>
            <person name="Gregory S.G."/>
            <person name="Gribble S."/>
            <person name="Griffiths C."/>
            <person name="Grocock R."/>
            <person name="Gu Y."/>
            <person name="Gwilliam R."/>
            <person name="Hamilton C."/>
            <person name="Hart E.A."/>
            <person name="Hawes A."/>
            <person name="Heath P.D."/>
            <person name="Heitmann K."/>
            <person name="Hennig S."/>
            <person name="Hernandez J."/>
            <person name="Hinzmann B."/>
            <person name="Ho S."/>
            <person name="Hoffs M."/>
            <person name="Howden P.J."/>
            <person name="Huckle E.J."/>
            <person name="Hume J."/>
            <person name="Hunt P.J."/>
            <person name="Hunt A.R."/>
            <person name="Isherwood J."/>
            <person name="Jacob L."/>
            <person name="Johnson D."/>
            <person name="Jones S."/>
            <person name="de Jong P.J."/>
            <person name="Joseph S.S."/>
            <person name="Keenan S."/>
            <person name="Kelly S."/>
            <person name="Kershaw J.K."/>
            <person name="Khan Z."/>
            <person name="Kioschis P."/>
            <person name="Klages S."/>
            <person name="Knights A.J."/>
            <person name="Kosiura A."/>
            <person name="Kovar-Smith C."/>
            <person name="Laird G.K."/>
            <person name="Langford C."/>
            <person name="Lawlor S."/>
            <person name="Leversha M."/>
            <person name="Lewis L."/>
            <person name="Liu W."/>
            <person name="Lloyd C."/>
            <person name="Lloyd D.M."/>
            <person name="Loulseged H."/>
            <person name="Loveland J.E."/>
            <person name="Lovell J.D."/>
            <person name="Lozado R."/>
            <person name="Lu J."/>
            <person name="Lyne R."/>
            <person name="Ma J."/>
            <person name="Maheshwari M."/>
            <person name="Matthews L.H."/>
            <person name="McDowall J."/>
            <person name="McLaren S."/>
            <person name="McMurray A."/>
            <person name="Meidl P."/>
            <person name="Meitinger T."/>
            <person name="Milne S."/>
            <person name="Miner G."/>
            <person name="Mistry S.L."/>
            <person name="Morgan M."/>
            <person name="Morris S."/>
            <person name="Mueller I."/>
            <person name="Mullikin J.C."/>
            <person name="Nguyen N."/>
            <person name="Nordsiek G."/>
            <person name="Nyakatura G."/>
            <person name="O'dell C.N."/>
            <person name="Okwuonu G."/>
            <person name="Palmer S."/>
            <person name="Pandian R."/>
            <person name="Parker D."/>
            <person name="Parrish J."/>
            <person name="Pasternak S."/>
            <person name="Patel D."/>
            <person name="Pearce A.V."/>
            <person name="Pearson D.M."/>
            <person name="Pelan S.E."/>
            <person name="Perez L."/>
            <person name="Porter K.M."/>
            <person name="Ramsey Y."/>
            <person name="Reichwald K."/>
            <person name="Rhodes S."/>
            <person name="Ridler K.A."/>
            <person name="Schlessinger D."/>
            <person name="Schueler M.G."/>
            <person name="Sehra H.K."/>
            <person name="Shaw-Smith C."/>
            <person name="Shen H."/>
            <person name="Sheridan E.M."/>
            <person name="Shownkeen R."/>
            <person name="Skuce C.D."/>
            <person name="Smith M.L."/>
            <person name="Sotheran E.C."/>
            <person name="Steingruber H.E."/>
            <person name="Steward C.A."/>
            <person name="Storey R."/>
            <person name="Swann R.M."/>
            <person name="Swarbreck D."/>
            <person name="Tabor P.E."/>
            <person name="Taudien S."/>
            <person name="Taylor T."/>
            <person name="Teague B."/>
            <person name="Thomas K."/>
            <person name="Thorpe A."/>
            <person name="Timms K."/>
            <person name="Tracey A."/>
            <person name="Trevanion S."/>
            <person name="Tromans A.C."/>
            <person name="d'Urso M."/>
            <person name="Verduzco D."/>
            <person name="Villasana D."/>
            <person name="Waldron L."/>
            <person name="Wall M."/>
            <person name="Wang Q."/>
            <person name="Warren J."/>
            <person name="Warry G.L."/>
            <person name="Wei X."/>
            <person name="West A."/>
            <person name="Whitehead S.L."/>
            <person name="Whiteley M.N."/>
            <person name="Wilkinson J.E."/>
            <person name="Willey D.L."/>
            <person name="Williams G."/>
            <person name="Williams L."/>
            <person name="Williamson A."/>
            <person name="Williamson H."/>
            <person name="Wilming L."/>
            <person name="Woodmansey R.L."/>
            <person name="Wray P.W."/>
            <person name="Yen J."/>
            <person name="Zhang J."/>
            <person name="Zhou J."/>
            <person name="Zoghbi H."/>
            <person name="Zorilla S."/>
            <person name="Buck D."/>
            <person name="Reinhardt R."/>
            <person name="Poustka A."/>
            <person name="Rosenthal A."/>
            <person name="Lehrach H."/>
            <person name="Meindl A."/>
            <person name="Minx P.J."/>
            <person name="Hillier L.W."/>
            <person name="Willard H.F."/>
            <person name="Wilson R.K."/>
            <person name="Waterston R.H."/>
            <person name="Rice C.M."/>
            <person name="Vaudin M."/>
            <person name="Coulson A."/>
            <person name="Nelson D.L."/>
            <person name="Weinstock G."/>
            <person name="Sulston J.E."/>
            <person name="Durbin R.M."/>
            <person name="Hubbard T."/>
            <person name="Gibbs R.A."/>
            <person name="Beck S."/>
            <person name="Rogers J."/>
            <person name="Bentley D.R."/>
        </authorList>
    </citation>
    <scope>NUCLEOTIDE SEQUENCE [LARGE SCALE GENOMIC DNA]</scope>
</reference>
<reference key="2">
    <citation type="journal article" date="2001" name="J. Virol.">
        <title>Identification, phylogeny, and evolution of retroviral elements based on their envelope genes.</title>
        <authorList>
            <person name="Benit L."/>
            <person name="Dessen P."/>
            <person name="Heidmann T."/>
        </authorList>
    </citation>
    <scope>CHARACTERIZATION</scope>
</reference>
<reference key="3">
    <citation type="journal article" date="2003" name="Virology">
        <title>Characterization of the low-copy HERV-Fc family: evidence for recent integrations in primates of elements with coding envelope genes.</title>
        <authorList>
            <person name="Benit L."/>
            <person name="Calteau A."/>
            <person name="Heidmann T."/>
        </authorList>
    </citation>
    <scope>CHARACTERIZATION</scope>
</reference>
<reference key="4">
    <citation type="journal article" date="2003" name="Proc. Natl. Acad. Sci. U.S.A.">
        <title>Genomewide screening for fusogenic human endogenous retrovirus envelopes identifies syncytin 2, a gene conserved on primate evolution.</title>
        <authorList>
            <person name="Blaise S."/>
            <person name="de Parseval N."/>
            <person name="Benit L."/>
            <person name="Heidmann T."/>
        </authorList>
    </citation>
    <scope>FUNCTION</scope>
</reference>
<reference key="5">
    <citation type="journal article" date="2003" name="J. Virol.">
        <title>Survey of human genes of retroviral origin: identification and transcriptome of the genes with coding capacity for complete envelope proteins.</title>
        <authorList>
            <person name="de Parseval N."/>
            <person name="Lazar V."/>
            <person name="Casella J.-F."/>
            <person name="Benit L."/>
            <person name="Heidmann T."/>
        </authorList>
    </citation>
    <scope>TISSUE SPECIFICITY</scope>
</reference>
<name>EFC1_HUMAN</name>
<organism>
    <name type="scientific">Homo sapiens</name>
    <name type="common">Human</name>
    <dbReference type="NCBI Taxonomy" id="9606"/>
    <lineage>
        <taxon>Eukaryota</taxon>
        <taxon>Metazoa</taxon>
        <taxon>Chordata</taxon>
        <taxon>Craniata</taxon>
        <taxon>Vertebrata</taxon>
        <taxon>Euteleostomi</taxon>
        <taxon>Mammalia</taxon>
        <taxon>Eutheria</taxon>
        <taxon>Euarchontoglires</taxon>
        <taxon>Primates</taxon>
        <taxon>Haplorrhini</taxon>
        <taxon>Catarrhini</taxon>
        <taxon>Hominidae</taxon>
        <taxon>Homo</taxon>
    </lineage>
</organism>
<evidence type="ECO:0000250" key="1"/>
<evidence type="ECO:0000255" key="2"/>
<evidence type="ECO:0000269" key="3">
    <source>
    </source>
</evidence>
<evidence type="ECO:0000269" key="4">
    <source>
    </source>
</evidence>
<evidence type="ECO:0000305" key="5"/>
<comment type="function">
    <text evidence="4">Retroviral envelope proteins mediate receptor recognition and membrane fusion during early infection. Endogenous envelope proteins may have kept, lost or modified their original function during evolution. This endogenous envelope protein has lost its original fusogenic properties.</text>
</comment>
<comment type="function">
    <text evidence="1">SU mediates receptor recognition.</text>
</comment>
<comment type="function">
    <text evidence="1">TM anchors the envelope heterodimer to the viral membrane through one transmembrane domain. The other hydrophobic domain, called fusion peptide, mediates fusion of the viral membrane with the target cell membrane (By similarity).</text>
</comment>
<comment type="subunit">
    <text evidence="1">The surface (SU) and transmembrane (TM) proteins form a heterodimer. SU and TM are attached by noncovalent interactions or by a labile interchain disulfide bond (By similarity).</text>
</comment>
<comment type="subcellular location">
    <subcellularLocation>
        <location>Virion</location>
    </subcellularLocation>
</comment>
<comment type="subcellular location">
    <molecule>Transmembrane protein</molecule>
    <subcellularLocation>
        <location evidence="5">Cell membrane</location>
        <topology evidence="5">Single-pass membrane protein</topology>
    </subcellularLocation>
</comment>
<comment type="tissue specificity">
    <text evidence="3">Low expression in skin, testis and trachea.</text>
</comment>
<comment type="domain">
    <text evidence="1">The CKS-17 immunosuppressive domain is present in many retroviral envelope proteins. As a synthetic peptide, it inhibits immune function in vitro and in vivo (By similarity).</text>
</comment>
<comment type="PTM">
    <text evidence="1">Specific enzymatic cleavages in vivo yield the mature SU and TM proteins.</text>
</comment>
<comment type="PTM">
    <text evidence="1">The CXXC motif is highly conserved across a broad range of retroviral envelope proteins. It is thought to participate in the formation of a labile disulfide bond possibly with the CX6CC motif present in the transmembrane protein (By similarity).</text>
</comment>
<comment type="miscellaneous">
    <text>Orthologs in P.troglodytes and G.gorilla (truncated).</text>
</comment>
<comment type="similarity">
    <text evidence="5">Belongs to the gamma type-C retroviral envelope protein family. HERV class-I F(c)1 env subfamily.</text>
</comment>
<comment type="caution">
    <text evidence="5">CKS-17 sequence does not match the minimal active consensus.</text>
</comment>